<reference key="1">
    <citation type="submission" date="2007-03" db="EMBL/GenBank/DDBJ databases">
        <authorList>
            <person name="Heidelberg J."/>
        </authorList>
    </citation>
    <scope>NUCLEOTIDE SEQUENCE [LARGE SCALE GENOMIC DNA]</scope>
    <source>
        <strain>ATCC 39541 / Classical Ogawa 395 / O395</strain>
    </source>
</reference>
<reference key="2">
    <citation type="journal article" date="2008" name="PLoS ONE">
        <title>A recalibrated molecular clock and independent origins for the cholera pandemic clones.</title>
        <authorList>
            <person name="Feng L."/>
            <person name="Reeves P.R."/>
            <person name="Lan R."/>
            <person name="Ren Y."/>
            <person name="Gao C."/>
            <person name="Zhou Z."/>
            <person name="Ren Y."/>
            <person name="Cheng J."/>
            <person name="Wang W."/>
            <person name="Wang J."/>
            <person name="Qian W."/>
            <person name="Li D."/>
            <person name="Wang L."/>
        </authorList>
    </citation>
    <scope>NUCLEOTIDE SEQUENCE [LARGE SCALE GENOMIC DNA]</scope>
    <source>
        <strain>ATCC 39541 / Classical Ogawa 395 / O395</strain>
    </source>
</reference>
<evidence type="ECO:0000255" key="1">
    <source>
        <dbReference type="HAMAP-Rule" id="MF_01301"/>
    </source>
</evidence>
<feature type="signal peptide" evidence="1">
    <location>
        <begin position="1"/>
        <end position="26"/>
    </location>
</feature>
<feature type="chain" id="PRO_0000322015" description="Maltoporin">
    <location>
        <begin position="27"/>
        <end position="416"/>
    </location>
</feature>
<feature type="site" description="Greasy slide, important in sugar transport" evidence="1">
    <location>
        <position position="32"/>
    </location>
</feature>
<feature type="site" description="Greasy slide, important in sugar transport" evidence="1">
    <location>
        <position position="64"/>
    </location>
</feature>
<feature type="site" description="Greasy slide, important in sugar transport" evidence="1">
    <location>
        <position position="96"/>
    </location>
</feature>
<feature type="site" description="Important in sugar transport" evidence="1">
    <location>
        <position position="140"/>
    </location>
</feature>
<feature type="site" description="Greasy slide, important in sugar transport" evidence="1">
    <location>
        <position position="231"/>
    </location>
</feature>
<feature type="site" description="Greasy slide, important in sugar transport" evidence="1">
    <location>
        <position position="378"/>
    </location>
</feature>
<feature type="site" description="Greasy slide, important in sugar transport" evidence="1">
    <location>
        <position position="415"/>
    </location>
</feature>
<keyword id="KW-0998">Cell outer membrane</keyword>
<keyword id="KW-0406">Ion transport</keyword>
<keyword id="KW-0472">Membrane</keyword>
<keyword id="KW-0626">Porin</keyword>
<keyword id="KW-0732">Signal</keyword>
<keyword id="KW-0762">Sugar transport</keyword>
<keyword id="KW-0812">Transmembrane</keyword>
<keyword id="KW-1134">Transmembrane beta strand</keyword>
<keyword id="KW-0813">Transport</keyword>
<accession>A5F137</accession>
<accession>C3M6W8</accession>
<gene>
    <name evidence="1" type="primary">lamB</name>
    <name type="synonym">ompS</name>
    <name type="ordered locus">VC0395_0213</name>
    <name type="ordered locus">VC395_A1051</name>
</gene>
<dbReference type="EMBL" id="CP000626">
    <property type="protein sequence ID" value="ABQ19267.1"/>
    <property type="molecule type" value="Genomic_DNA"/>
</dbReference>
<dbReference type="EMBL" id="CP001236">
    <property type="protein sequence ID" value="ACP11881.1"/>
    <property type="molecule type" value="Genomic_DNA"/>
</dbReference>
<dbReference type="SMR" id="A5F137"/>
<dbReference type="KEGG" id="vco:VC0395_0213"/>
<dbReference type="KEGG" id="vcr:VC395_A1051"/>
<dbReference type="PATRIC" id="fig|345073.21.peg.3774"/>
<dbReference type="eggNOG" id="COG4580">
    <property type="taxonomic scope" value="Bacteria"/>
</dbReference>
<dbReference type="HOGENOM" id="CLU_032473_4_1_6"/>
<dbReference type="OrthoDB" id="106611at2"/>
<dbReference type="Proteomes" id="UP000000249">
    <property type="component" value="Chromosome 1"/>
</dbReference>
<dbReference type="GO" id="GO:0009279">
    <property type="term" value="C:cell outer membrane"/>
    <property type="evidence" value="ECO:0007669"/>
    <property type="project" value="UniProtKB-SubCell"/>
</dbReference>
<dbReference type="GO" id="GO:0046930">
    <property type="term" value="C:pore complex"/>
    <property type="evidence" value="ECO:0007669"/>
    <property type="project" value="UniProtKB-KW"/>
</dbReference>
<dbReference type="GO" id="GO:0042958">
    <property type="term" value="F:maltodextrin transmembrane transporter activity"/>
    <property type="evidence" value="ECO:0007669"/>
    <property type="project" value="InterPro"/>
</dbReference>
<dbReference type="GO" id="GO:0015481">
    <property type="term" value="F:maltose transporting porin activity"/>
    <property type="evidence" value="ECO:0007669"/>
    <property type="project" value="InterPro"/>
</dbReference>
<dbReference type="GO" id="GO:0006811">
    <property type="term" value="P:monoatomic ion transport"/>
    <property type="evidence" value="ECO:0007669"/>
    <property type="project" value="UniProtKB-KW"/>
</dbReference>
<dbReference type="CDD" id="cd01346">
    <property type="entry name" value="Maltoporin-like"/>
    <property type="match status" value="1"/>
</dbReference>
<dbReference type="Gene3D" id="2.40.170.10">
    <property type="entry name" value="Porin, LamB type"/>
    <property type="match status" value="1"/>
</dbReference>
<dbReference type="HAMAP" id="MF_01301">
    <property type="entry name" value="LamB"/>
    <property type="match status" value="1"/>
</dbReference>
<dbReference type="InterPro" id="IPR050286">
    <property type="entry name" value="G_neg_Bact_CarbUptk_Porin"/>
</dbReference>
<dbReference type="InterPro" id="IPR023738">
    <property type="entry name" value="Maltoporin"/>
</dbReference>
<dbReference type="InterPro" id="IPR003192">
    <property type="entry name" value="Porin_LamB"/>
</dbReference>
<dbReference type="InterPro" id="IPR036998">
    <property type="entry name" value="Porin_LamB_sf"/>
</dbReference>
<dbReference type="NCBIfam" id="NF006860">
    <property type="entry name" value="PRK09360.1"/>
    <property type="match status" value="1"/>
</dbReference>
<dbReference type="PANTHER" id="PTHR38762">
    <property type="entry name" value="CRYPTIC OUTER MEMBRANE PORIN BGLH-RELATED"/>
    <property type="match status" value="1"/>
</dbReference>
<dbReference type="PANTHER" id="PTHR38762:SF1">
    <property type="entry name" value="CRYPTIC OUTER MEMBRANE PORIN BGLH-RELATED"/>
    <property type="match status" value="1"/>
</dbReference>
<dbReference type="Pfam" id="PF02264">
    <property type="entry name" value="LamB"/>
    <property type="match status" value="1"/>
</dbReference>
<dbReference type="SUPFAM" id="SSF56935">
    <property type="entry name" value="Porins"/>
    <property type="match status" value="1"/>
</dbReference>
<sequence length="416" mass="45011">MELTMKKVSVIAAAVAATLAAGSAFAVDFNGYFRAGTGISGNGNADQAVNKAGTGRLGNENDNYYEFGFAEELKTGEQTWKVESMIAQGNSGANGWEDGDFNVAQFNVQAKGLLASDQEAVMWAGKRYYQRKDIHITDFYFLNTSGTGGGIENLSVGNQKLSVALVQDGDNTNSSGYIFDARLANIGLWENASLELAMAYNFATEKDSKNEVADDGVLVSAILHQGLSNGFNQTVFQYGTAGYGAQAANFWGAGSYYARGTEAFNDASGFRLLNWGVINLGENWEMGHQLAYLAGSDIGGQFGGDGANKNTYTGKSFDIDQYSVVVRPMYKWNDTMRTVFEAGYNAGEKISNGGLATEDFGNAKFTVAQAWAMGDSFWARPELRVYGTYLLDTENDKAFGDDDTEFVVGIQVEAWW</sequence>
<comment type="function">
    <text evidence="1">Involved in the transport of maltose and maltodextrins.</text>
</comment>
<comment type="catalytic activity">
    <reaction evidence="1">
        <text>beta-maltose(in) = beta-maltose(out)</text>
        <dbReference type="Rhea" id="RHEA:29731"/>
        <dbReference type="ChEBI" id="CHEBI:18147"/>
    </reaction>
</comment>
<comment type="subunit">
    <text evidence="1">Homotrimer formed of three 18-stranded antiparallel beta-barrels, containing three independent channels.</text>
</comment>
<comment type="subcellular location">
    <subcellularLocation>
        <location evidence="1">Cell outer membrane</location>
        <topology evidence="1">Multi-pass membrane protein</topology>
    </subcellularLocation>
</comment>
<comment type="induction">
    <text evidence="1">By maltose.</text>
</comment>
<comment type="similarity">
    <text evidence="1">Belongs to the porin LamB (TC 1.B.3) family.</text>
</comment>
<proteinExistence type="inferred from homology"/>
<protein>
    <recommendedName>
        <fullName evidence="1">Maltoporin</fullName>
    </recommendedName>
    <alternativeName>
        <fullName evidence="1">Maltose-inducible porin</fullName>
    </alternativeName>
</protein>
<organism>
    <name type="scientific">Vibrio cholerae serotype O1 (strain ATCC 39541 / Classical Ogawa 395 / O395)</name>
    <dbReference type="NCBI Taxonomy" id="345073"/>
    <lineage>
        <taxon>Bacteria</taxon>
        <taxon>Pseudomonadati</taxon>
        <taxon>Pseudomonadota</taxon>
        <taxon>Gammaproteobacteria</taxon>
        <taxon>Vibrionales</taxon>
        <taxon>Vibrionaceae</taxon>
        <taxon>Vibrio</taxon>
    </lineage>
</organism>
<name>LAMB_VIBC3</name>